<sequence length="121" mass="13245">MSTKLPIVISNGTAFKKVPVQLLLNSGSEAQHGLPRNADSQPARPRTGITRTCGQCGEIKTSLQWREGPNGAACLCNACGLFFRKLILRFGRAAAKRYMEQIKGTGTKRRIPKELTGTVRF</sequence>
<dbReference type="EMBL" id="Z37996">
    <property type="protein sequence ID" value="CAA86083.1"/>
    <property type="molecule type" value="Genomic_DNA"/>
</dbReference>
<dbReference type="EMBL" id="AY557847">
    <property type="protein sequence ID" value="AAS56173.1"/>
    <property type="molecule type" value="Genomic_DNA"/>
</dbReference>
<dbReference type="EMBL" id="BK006942">
    <property type="protein sequence ID" value="DAA08559.1"/>
    <property type="molecule type" value="Genomic_DNA"/>
</dbReference>
<dbReference type="PIR" id="S48357">
    <property type="entry name" value="S48357"/>
</dbReference>
<dbReference type="RefSeq" id="NP_012278.3">
    <property type="nucleotide sequence ID" value="NM_001179535.3"/>
</dbReference>
<dbReference type="SMR" id="P40569"/>
<dbReference type="BioGRID" id="35005">
    <property type="interactions" value="31"/>
</dbReference>
<dbReference type="DIP" id="DIP-5683N"/>
<dbReference type="FunCoup" id="P40569">
    <property type="interactions" value="427"/>
</dbReference>
<dbReference type="STRING" id="4932.YIR013C"/>
<dbReference type="PaxDb" id="4932-YIR013C"/>
<dbReference type="EnsemblFungi" id="YIR013C_mRNA">
    <property type="protein sequence ID" value="YIR013C"/>
    <property type="gene ID" value="YIR013C"/>
</dbReference>
<dbReference type="GeneID" id="854830"/>
<dbReference type="KEGG" id="sce:YIR013C"/>
<dbReference type="AGR" id="SGD:S000001452"/>
<dbReference type="SGD" id="S000001452">
    <property type="gene designation" value="GAT4"/>
</dbReference>
<dbReference type="VEuPathDB" id="FungiDB:YIR013C"/>
<dbReference type="eggNOG" id="KOG1601">
    <property type="taxonomic scope" value="Eukaryota"/>
</dbReference>
<dbReference type="GeneTree" id="ENSGT00940000180694"/>
<dbReference type="HOGENOM" id="CLU_2039395_0_0_1"/>
<dbReference type="InParanoid" id="P40569"/>
<dbReference type="OrthoDB" id="2162994at2759"/>
<dbReference type="BioCyc" id="YEAST:G3O-31434-MONOMER"/>
<dbReference type="BioGRID-ORCS" id="854830">
    <property type="hits" value="2 hits in 10 CRISPR screens"/>
</dbReference>
<dbReference type="PRO" id="PR:P40569"/>
<dbReference type="Proteomes" id="UP000002311">
    <property type="component" value="Chromosome IX"/>
</dbReference>
<dbReference type="RNAct" id="P40569">
    <property type="molecule type" value="protein"/>
</dbReference>
<dbReference type="GO" id="GO:0005634">
    <property type="term" value="C:nucleus"/>
    <property type="evidence" value="ECO:0007005"/>
    <property type="project" value="SGD"/>
</dbReference>
<dbReference type="GO" id="GO:0043565">
    <property type="term" value="F:sequence-specific DNA binding"/>
    <property type="evidence" value="ECO:0007005"/>
    <property type="project" value="SGD"/>
</dbReference>
<dbReference type="GO" id="GO:0008270">
    <property type="term" value="F:zinc ion binding"/>
    <property type="evidence" value="ECO:0007669"/>
    <property type="project" value="UniProtKB-KW"/>
</dbReference>
<dbReference type="GO" id="GO:0034224">
    <property type="term" value="P:cellular response to zinc ion starvation"/>
    <property type="evidence" value="ECO:0000314"/>
    <property type="project" value="SGD"/>
</dbReference>
<dbReference type="GO" id="GO:0045944">
    <property type="term" value="P:positive regulation of transcription by RNA polymerase II"/>
    <property type="evidence" value="ECO:0000314"/>
    <property type="project" value="SGD"/>
</dbReference>
<dbReference type="GO" id="GO:0006357">
    <property type="term" value="P:regulation of transcription by RNA polymerase II"/>
    <property type="evidence" value="ECO:0000318"/>
    <property type="project" value="GO_Central"/>
</dbReference>
<dbReference type="CDD" id="cd00202">
    <property type="entry name" value="ZnF_GATA"/>
    <property type="match status" value="1"/>
</dbReference>
<dbReference type="FunFam" id="3.30.50.10:FF:000046">
    <property type="entry name" value="Gat4p"/>
    <property type="match status" value="1"/>
</dbReference>
<dbReference type="Gene3D" id="3.30.50.10">
    <property type="entry name" value="Erythroid Transcription Factor GATA-1, subunit A"/>
    <property type="match status" value="1"/>
</dbReference>
<dbReference type="InterPro" id="IPR051140">
    <property type="entry name" value="GATA_TF"/>
</dbReference>
<dbReference type="InterPro" id="IPR000679">
    <property type="entry name" value="Znf_GATA"/>
</dbReference>
<dbReference type="InterPro" id="IPR013088">
    <property type="entry name" value="Znf_NHR/GATA"/>
</dbReference>
<dbReference type="PANTHER" id="PTHR45658">
    <property type="entry name" value="GATA TRANSCRIPTION FACTOR"/>
    <property type="match status" value="1"/>
</dbReference>
<dbReference type="PANTHER" id="PTHR45658:SF149">
    <property type="entry name" value="PROTEIN GAT3-RELATED"/>
    <property type="match status" value="1"/>
</dbReference>
<dbReference type="Pfam" id="PF00320">
    <property type="entry name" value="GATA"/>
    <property type="match status" value="1"/>
</dbReference>
<dbReference type="SMART" id="SM00401">
    <property type="entry name" value="ZnF_GATA"/>
    <property type="match status" value="1"/>
</dbReference>
<dbReference type="SUPFAM" id="SSF57716">
    <property type="entry name" value="Glucocorticoid receptor-like (DNA-binding domain)"/>
    <property type="match status" value="1"/>
</dbReference>
<dbReference type="PROSITE" id="PS00344">
    <property type="entry name" value="GATA_ZN_FINGER_1"/>
    <property type="match status" value="1"/>
</dbReference>
<dbReference type="PROSITE" id="PS50114">
    <property type="entry name" value="GATA_ZN_FINGER_2"/>
    <property type="match status" value="1"/>
</dbReference>
<organism>
    <name type="scientific">Saccharomyces cerevisiae (strain ATCC 204508 / S288c)</name>
    <name type="common">Baker's yeast</name>
    <dbReference type="NCBI Taxonomy" id="559292"/>
    <lineage>
        <taxon>Eukaryota</taxon>
        <taxon>Fungi</taxon>
        <taxon>Dikarya</taxon>
        <taxon>Ascomycota</taxon>
        <taxon>Saccharomycotina</taxon>
        <taxon>Saccharomycetes</taxon>
        <taxon>Saccharomycetales</taxon>
        <taxon>Saccharomycetaceae</taxon>
        <taxon>Saccharomyces</taxon>
    </lineage>
</organism>
<evidence type="ECO:0000255" key="1">
    <source>
        <dbReference type="PROSITE-ProRule" id="PRU00094"/>
    </source>
</evidence>
<evidence type="ECO:0000256" key="2">
    <source>
        <dbReference type="SAM" id="MobiDB-lite"/>
    </source>
</evidence>
<name>GAT4_YEAST</name>
<proteinExistence type="predicted"/>
<feature type="chain" id="PRO_0000083487" description="Protein GAT4">
    <location>
        <begin position="1"/>
        <end position="121"/>
    </location>
</feature>
<feature type="zinc finger region" description="GATA-type" evidence="1">
    <location>
        <begin position="53"/>
        <end position="79"/>
    </location>
</feature>
<feature type="region of interest" description="Disordered" evidence="2">
    <location>
        <begin position="29"/>
        <end position="48"/>
    </location>
</feature>
<protein>
    <recommendedName>
        <fullName>Protein GAT4</fullName>
    </recommendedName>
</protein>
<gene>
    <name type="primary">GAT4</name>
    <name type="ordered locus">YIR013C</name>
</gene>
<reference key="1">
    <citation type="journal article" date="1997" name="Nature">
        <title>The nucleotide sequence of Saccharomyces cerevisiae chromosome IX.</title>
        <authorList>
            <person name="Churcher C.M."/>
            <person name="Bowman S."/>
            <person name="Badcock K."/>
            <person name="Bankier A.T."/>
            <person name="Brown D."/>
            <person name="Chillingworth T."/>
            <person name="Connor R."/>
            <person name="Devlin K."/>
            <person name="Gentles S."/>
            <person name="Hamlin N."/>
            <person name="Harris D.E."/>
            <person name="Horsnell T."/>
            <person name="Hunt S."/>
            <person name="Jagels K."/>
            <person name="Jones M."/>
            <person name="Lye G."/>
            <person name="Moule S."/>
            <person name="Odell C."/>
            <person name="Pearson D."/>
            <person name="Rajandream M.A."/>
            <person name="Rice P."/>
            <person name="Rowley N."/>
            <person name="Skelton J."/>
            <person name="Smith V."/>
            <person name="Walsh S.V."/>
            <person name="Whitehead S."/>
            <person name="Barrell B.G."/>
        </authorList>
    </citation>
    <scope>NUCLEOTIDE SEQUENCE [LARGE SCALE GENOMIC DNA]</scope>
    <source>
        <strain>ATCC 204508 / S288c</strain>
    </source>
</reference>
<reference key="2">
    <citation type="journal article" date="2014" name="G3 (Bethesda)">
        <title>The reference genome sequence of Saccharomyces cerevisiae: Then and now.</title>
        <authorList>
            <person name="Engel S.R."/>
            <person name="Dietrich F.S."/>
            <person name="Fisk D.G."/>
            <person name="Binkley G."/>
            <person name="Balakrishnan R."/>
            <person name="Costanzo M.C."/>
            <person name="Dwight S.S."/>
            <person name="Hitz B.C."/>
            <person name="Karra K."/>
            <person name="Nash R.S."/>
            <person name="Weng S."/>
            <person name="Wong E.D."/>
            <person name="Lloyd P."/>
            <person name="Skrzypek M.S."/>
            <person name="Miyasato S.R."/>
            <person name="Simison M."/>
            <person name="Cherry J.M."/>
        </authorList>
    </citation>
    <scope>GENOME REANNOTATION</scope>
    <source>
        <strain>ATCC 204508 / S288c</strain>
    </source>
</reference>
<reference key="3">
    <citation type="journal article" date="2007" name="Genome Res.">
        <title>Approaching a complete repository of sequence-verified protein-encoding clones for Saccharomyces cerevisiae.</title>
        <authorList>
            <person name="Hu Y."/>
            <person name="Rolfs A."/>
            <person name="Bhullar B."/>
            <person name="Murthy T.V.S."/>
            <person name="Zhu C."/>
            <person name="Berger M.F."/>
            <person name="Camargo A.A."/>
            <person name="Kelley F."/>
            <person name="McCarron S."/>
            <person name="Jepson D."/>
            <person name="Richardson A."/>
            <person name="Raphael J."/>
            <person name="Moreira D."/>
            <person name="Taycher E."/>
            <person name="Zuo D."/>
            <person name="Mohr S."/>
            <person name="Kane M.F."/>
            <person name="Williamson J."/>
            <person name="Simpson A.J.G."/>
            <person name="Bulyk M.L."/>
            <person name="Harlow E."/>
            <person name="Marsischky G."/>
            <person name="Kolodner R.D."/>
            <person name="LaBaer J."/>
        </authorList>
    </citation>
    <scope>NUCLEOTIDE SEQUENCE [GENOMIC DNA]</scope>
    <source>
        <strain>ATCC 204508 / S288c</strain>
    </source>
</reference>
<reference key="4">
    <citation type="journal article" date="1999" name="Yeast">
        <title>Genome-wide transcriptional analysis in S. cerevisiae by mini-array membrane hybridization.</title>
        <authorList>
            <person name="Cox K.H."/>
            <person name="Pinchak A.B."/>
            <person name="Cooper T.G."/>
        </authorList>
    </citation>
    <scope>IDENTIFICATION</scope>
</reference>
<accession>P40569</accession>
<accession>D6VVU3</accession>
<keyword id="KW-0238">DNA-binding</keyword>
<keyword id="KW-0479">Metal-binding</keyword>
<keyword id="KW-1185">Reference proteome</keyword>
<keyword id="KW-0862">Zinc</keyword>
<keyword id="KW-0863">Zinc-finger</keyword>